<dbReference type="EC" id="3.7.1.3" evidence="1"/>
<dbReference type="EMBL" id="AM920689">
    <property type="protein sequence ID" value="CAP52068.1"/>
    <property type="molecule type" value="Genomic_DNA"/>
</dbReference>
<dbReference type="SMR" id="B0RUZ9"/>
<dbReference type="KEGG" id="xca:xcc-b100_2707"/>
<dbReference type="HOGENOM" id="CLU_003433_4_0_6"/>
<dbReference type="UniPathway" id="UPA00253">
    <property type="reaction ID" value="UER00329"/>
</dbReference>
<dbReference type="UniPathway" id="UPA00334">
    <property type="reaction ID" value="UER00455"/>
</dbReference>
<dbReference type="Proteomes" id="UP000001188">
    <property type="component" value="Chromosome"/>
</dbReference>
<dbReference type="GO" id="GO:0005737">
    <property type="term" value="C:cytoplasm"/>
    <property type="evidence" value="ECO:0007669"/>
    <property type="project" value="InterPro"/>
</dbReference>
<dbReference type="GO" id="GO:0030429">
    <property type="term" value="F:kynureninase activity"/>
    <property type="evidence" value="ECO:0007669"/>
    <property type="project" value="UniProtKB-UniRule"/>
</dbReference>
<dbReference type="GO" id="GO:0030170">
    <property type="term" value="F:pyridoxal phosphate binding"/>
    <property type="evidence" value="ECO:0007669"/>
    <property type="project" value="UniProtKB-UniRule"/>
</dbReference>
<dbReference type="GO" id="GO:0043420">
    <property type="term" value="P:anthranilate metabolic process"/>
    <property type="evidence" value="ECO:0007669"/>
    <property type="project" value="TreeGrafter"/>
</dbReference>
<dbReference type="GO" id="GO:0097053">
    <property type="term" value="P:L-kynurenine catabolic process"/>
    <property type="evidence" value="ECO:0007669"/>
    <property type="project" value="UniProtKB-UniRule"/>
</dbReference>
<dbReference type="GO" id="GO:0019441">
    <property type="term" value="P:L-tryptophan catabolic process to kynurenine"/>
    <property type="evidence" value="ECO:0007669"/>
    <property type="project" value="TreeGrafter"/>
</dbReference>
<dbReference type="GO" id="GO:0009435">
    <property type="term" value="P:NAD biosynthetic process"/>
    <property type="evidence" value="ECO:0007669"/>
    <property type="project" value="UniProtKB-UniPathway"/>
</dbReference>
<dbReference type="GO" id="GO:0019805">
    <property type="term" value="P:quinolinate biosynthetic process"/>
    <property type="evidence" value="ECO:0007669"/>
    <property type="project" value="UniProtKB-UniRule"/>
</dbReference>
<dbReference type="FunFam" id="3.40.640.10:FF:000031">
    <property type="entry name" value="Kynureninase"/>
    <property type="match status" value="1"/>
</dbReference>
<dbReference type="Gene3D" id="3.90.1150.10">
    <property type="entry name" value="Aspartate Aminotransferase, domain 1"/>
    <property type="match status" value="1"/>
</dbReference>
<dbReference type="Gene3D" id="3.40.640.10">
    <property type="entry name" value="Type I PLP-dependent aspartate aminotransferase-like (Major domain)"/>
    <property type="match status" value="1"/>
</dbReference>
<dbReference type="HAMAP" id="MF_01970">
    <property type="entry name" value="Kynureninase"/>
    <property type="match status" value="1"/>
</dbReference>
<dbReference type="InterPro" id="IPR010111">
    <property type="entry name" value="Kynureninase"/>
</dbReference>
<dbReference type="InterPro" id="IPR015424">
    <property type="entry name" value="PyrdxlP-dep_Trfase"/>
</dbReference>
<dbReference type="InterPro" id="IPR015421">
    <property type="entry name" value="PyrdxlP-dep_Trfase_major"/>
</dbReference>
<dbReference type="InterPro" id="IPR015422">
    <property type="entry name" value="PyrdxlP-dep_Trfase_small"/>
</dbReference>
<dbReference type="NCBIfam" id="TIGR01814">
    <property type="entry name" value="kynureninase"/>
    <property type="match status" value="1"/>
</dbReference>
<dbReference type="PANTHER" id="PTHR14084">
    <property type="entry name" value="KYNURENINASE"/>
    <property type="match status" value="1"/>
</dbReference>
<dbReference type="PANTHER" id="PTHR14084:SF0">
    <property type="entry name" value="KYNURENINASE"/>
    <property type="match status" value="1"/>
</dbReference>
<dbReference type="Pfam" id="PF22580">
    <property type="entry name" value="KYNU_C"/>
    <property type="match status" value="1"/>
</dbReference>
<dbReference type="PIRSF" id="PIRSF038800">
    <property type="entry name" value="KYNU"/>
    <property type="match status" value="1"/>
</dbReference>
<dbReference type="SUPFAM" id="SSF53383">
    <property type="entry name" value="PLP-dependent transferases"/>
    <property type="match status" value="1"/>
</dbReference>
<feature type="chain" id="PRO_0000357017" description="Kynureninase">
    <location>
        <begin position="1"/>
        <end position="424"/>
    </location>
</feature>
<feature type="binding site" evidence="1">
    <location>
        <position position="106"/>
    </location>
    <ligand>
        <name>pyridoxal 5'-phosphate</name>
        <dbReference type="ChEBI" id="CHEBI:597326"/>
    </ligand>
</feature>
<feature type="binding site" evidence="1">
    <location>
        <position position="107"/>
    </location>
    <ligand>
        <name>pyridoxal 5'-phosphate</name>
        <dbReference type="ChEBI" id="CHEBI:597326"/>
    </ligand>
</feature>
<feature type="binding site" evidence="1">
    <location>
        <begin position="134"/>
        <end position="137"/>
    </location>
    <ligand>
        <name>pyridoxal 5'-phosphate</name>
        <dbReference type="ChEBI" id="CHEBI:597326"/>
    </ligand>
</feature>
<feature type="binding site" evidence="1">
    <location>
        <position position="219"/>
    </location>
    <ligand>
        <name>pyridoxal 5'-phosphate</name>
        <dbReference type="ChEBI" id="CHEBI:597326"/>
    </ligand>
</feature>
<feature type="binding site" evidence="1">
    <location>
        <position position="222"/>
    </location>
    <ligand>
        <name>pyridoxal 5'-phosphate</name>
        <dbReference type="ChEBI" id="CHEBI:597326"/>
    </ligand>
</feature>
<feature type="binding site" evidence="1">
    <location>
        <position position="244"/>
    </location>
    <ligand>
        <name>pyridoxal 5'-phosphate</name>
        <dbReference type="ChEBI" id="CHEBI:597326"/>
    </ligand>
</feature>
<feature type="binding site" evidence="1">
    <location>
        <position position="274"/>
    </location>
    <ligand>
        <name>pyridoxal 5'-phosphate</name>
        <dbReference type="ChEBI" id="CHEBI:597326"/>
    </ligand>
</feature>
<feature type="binding site" evidence="1">
    <location>
        <position position="302"/>
    </location>
    <ligand>
        <name>pyridoxal 5'-phosphate</name>
        <dbReference type="ChEBI" id="CHEBI:597326"/>
    </ligand>
</feature>
<feature type="modified residue" description="N6-(pyridoxal phosphate)lysine" evidence="1">
    <location>
        <position position="245"/>
    </location>
</feature>
<sequence length="424" mass="46170">MMTDPLSRSHAAALDAADPLRALRDAFVFPQHGGQDQTYFVGNSLGLQPRQARAMVSEVLDQWGALAVEGHFTGPTQWLTYHQLVRDGLARVVGAQPDEVVAMNTLTVNLHLMMASFYRPSAERAAILIEAGAFPSDRHAVESQLRLHGLDPDTHLIEVEPDAADGTLSMDAIAAAIAQHGPRLALVLWPGIQYRTGQAFALGEIARLARAQGAAVGFDLAHAVGNIPLSLHDDGVDFAVWCHYKYLNAGPGAVGGCFVHARHAHSNLPRMAGWWGHEQPTRFRMEPQFVPSPGAEGWQLSNPPVLALAPLRASLELFDQAGMPALRAKSEQLTGHLEQLIHTRVPQVLQIVTPADPAQRGCQLSLRVAGGRTQGRALFEYLQSVGVLGDWREPDVIRIAPVPLYNRFCDLHQLVEHVETWAAA</sequence>
<name>KYNU_XANCB</name>
<protein>
    <recommendedName>
        <fullName evidence="1">Kynureninase</fullName>
        <ecNumber evidence="1">3.7.1.3</ecNumber>
    </recommendedName>
    <alternativeName>
        <fullName evidence="1">L-kynurenine hydrolase</fullName>
    </alternativeName>
</protein>
<keyword id="KW-0378">Hydrolase</keyword>
<keyword id="KW-0662">Pyridine nucleotide biosynthesis</keyword>
<keyword id="KW-0663">Pyridoxal phosphate</keyword>
<accession>B0RUZ9</accession>
<proteinExistence type="inferred from homology"/>
<gene>
    <name evidence="1" type="primary">kynU</name>
    <name type="ordered locus">xcc-b100_2707</name>
</gene>
<comment type="function">
    <text evidence="1">Catalyzes the cleavage of L-kynurenine (L-Kyn) and L-3-hydroxykynurenine (L-3OHKyn) into anthranilic acid (AA) and 3-hydroxyanthranilic acid (3-OHAA), respectively.</text>
</comment>
<comment type="catalytic activity">
    <reaction evidence="1">
        <text>L-kynurenine + H2O = anthranilate + L-alanine + H(+)</text>
        <dbReference type="Rhea" id="RHEA:16813"/>
        <dbReference type="ChEBI" id="CHEBI:15377"/>
        <dbReference type="ChEBI" id="CHEBI:15378"/>
        <dbReference type="ChEBI" id="CHEBI:16567"/>
        <dbReference type="ChEBI" id="CHEBI:57959"/>
        <dbReference type="ChEBI" id="CHEBI:57972"/>
        <dbReference type="EC" id="3.7.1.3"/>
    </reaction>
</comment>
<comment type="catalytic activity">
    <reaction evidence="1">
        <text>3-hydroxy-L-kynurenine + H2O = 3-hydroxyanthranilate + L-alanine + H(+)</text>
        <dbReference type="Rhea" id="RHEA:25143"/>
        <dbReference type="ChEBI" id="CHEBI:15377"/>
        <dbReference type="ChEBI" id="CHEBI:15378"/>
        <dbReference type="ChEBI" id="CHEBI:36559"/>
        <dbReference type="ChEBI" id="CHEBI:57972"/>
        <dbReference type="ChEBI" id="CHEBI:58125"/>
        <dbReference type="EC" id="3.7.1.3"/>
    </reaction>
</comment>
<comment type="cofactor">
    <cofactor evidence="1">
        <name>pyridoxal 5'-phosphate</name>
        <dbReference type="ChEBI" id="CHEBI:597326"/>
    </cofactor>
</comment>
<comment type="pathway">
    <text evidence="1">Amino-acid degradation; L-kynurenine degradation; L-alanine and anthranilate from L-kynurenine: step 1/1.</text>
</comment>
<comment type="pathway">
    <text evidence="1">Cofactor biosynthesis; NAD(+) biosynthesis; quinolinate from L-kynurenine: step 2/3.</text>
</comment>
<comment type="subunit">
    <text evidence="1">Homodimer.</text>
</comment>
<comment type="similarity">
    <text evidence="1">Belongs to the kynureninase family.</text>
</comment>
<reference key="1">
    <citation type="journal article" date="2008" name="J. Biotechnol.">
        <title>The genome of Xanthomonas campestris pv. campestris B100 and its use for the reconstruction of metabolic pathways involved in xanthan biosynthesis.</title>
        <authorList>
            <person name="Vorhoelter F.-J."/>
            <person name="Schneiker S."/>
            <person name="Goesmann A."/>
            <person name="Krause L."/>
            <person name="Bekel T."/>
            <person name="Kaiser O."/>
            <person name="Linke B."/>
            <person name="Patschkowski T."/>
            <person name="Rueckert C."/>
            <person name="Schmid J."/>
            <person name="Sidhu V.K."/>
            <person name="Sieber V."/>
            <person name="Tauch A."/>
            <person name="Watt S.A."/>
            <person name="Weisshaar B."/>
            <person name="Becker A."/>
            <person name="Niehaus K."/>
            <person name="Puehler A."/>
        </authorList>
    </citation>
    <scope>NUCLEOTIDE SEQUENCE [LARGE SCALE GENOMIC DNA]</scope>
    <source>
        <strain>B100</strain>
    </source>
</reference>
<evidence type="ECO:0000255" key="1">
    <source>
        <dbReference type="HAMAP-Rule" id="MF_01970"/>
    </source>
</evidence>
<organism>
    <name type="scientific">Xanthomonas campestris pv. campestris (strain B100)</name>
    <dbReference type="NCBI Taxonomy" id="509169"/>
    <lineage>
        <taxon>Bacteria</taxon>
        <taxon>Pseudomonadati</taxon>
        <taxon>Pseudomonadota</taxon>
        <taxon>Gammaproteobacteria</taxon>
        <taxon>Lysobacterales</taxon>
        <taxon>Lysobacteraceae</taxon>
        <taxon>Xanthomonas</taxon>
    </lineage>
</organism>